<proteinExistence type="inferred from homology"/>
<protein>
    <recommendedName>
        <fullName evidence="3">Probable cytosolic Fe-S cluster assembly factor Bm6838</fullName>
    </recommendedName>
</protein>
<name>NARF_BRUMA</name>
<accession>A8PGQ3</accession>
<reference key="1">
    <citation type="journal article" date="2007" name="Science">
        <title>Draft genome of the filarial nematode parasite Brugia malayi.</title>
        <authorList>
            <person name="Ghedin E."/>
            <person name="Wang S."/>
            <person name="Spiro D."/>
            <person name="Caler E."/>
            <person name="Zhao Q."/>
            <person name="Crabtree J."/>
            <person name="Allen J.E."/>
            <person name="Delcher A.L."/>
            <person name="Guiliano D.B."/>
            <person name="Miranda-Saavedra D."/>
            <person name="Angiuoli S.V."/>
            <person name="Creasy T."/>
            <person name="Amedeo P."/>
            <person name="Haas B."/>
            <person name="El-Sayed N.M."/>
            <person name="Wortman J.R."/>
            <person name="Feldblyum T."/>
            <person name="Tallon L."/>
            <person name="Schatz M."/>
            <person name="Shumway M."/>
            <person name="Koo H."/>
            <person name="Salzberg S.L."/>
            <person name="Schobel S."/>
            <person name="Pertea M."/>
            <person name="Pop M."/>
            <person name="White O."/>
            <person name="Barton G.J."/>
            <person name="Carlow C.K.S."/>
            <person name="Crawford M.J."/>
            <person name="Daub J."/>
            <person name="Dimmic M.W."/>
            <person name="Estes C.F."/>
            <person name="Foster J.M."/>
            <person name="Ganatra M."/>
            <person name="Gregory W.F."/>
            <person name="Johnson N.M."/>
            <person name="Jin J."/>
            <person name="Komuniecki R."/>
            <person name="Korf I."/>
            <person name="Kumar S."/>
            <person name="Laney S."/>
            <person name="Li B.-W."/>
            <person name="Li W."/>
            <person name="Lindblom T.H."/>
            <person name="Lustigman S."/>
            <person name="Ma D."/>
            <person name="Maina C.V."/>
            <person name="Martin D.M."/>
            <person name="McCarter J.P."/>
            <person name="McReynolds L."/>
            <person name="Mitreva M."/>
            <person name="Nutman T.B."/>
            <person name="Parkinson J."/>
            <person name="Peregrin-Alvarez J.M."/>
            <person name="Poole C."/>
            <person name="Ren Q."/>
            <person name="Saunders L."/>
            <person name="Sluder A.E."/>
            <person name="Smith K."/>
            <person name="Stanke M."/>
            <person name="Unnasch T.R."/>
            <person name="Ware J."/>
            <person name="Wei A.D."/>
            <person name="Weil G."/>
            <person name="Williams D.J."/>
            <person name="Zhang Y."/>
            <person name="Williams S.A."/>
            <person name="Fraser-Liggett C."/>
            <person name="Slatko B."/>
            <person name="Blaxter M.L."/>
            <person name="Scott A.L."/>
        </authorList>
    </citation>
    <scope>NUCLEOTIDE SEQUENCE [LARGE SCALE GENOMIC DNA]</scope>
</reference>
<comment type="function">
    <text evidence="1">Component of the cytosolic iron-sulfur (Fe/S) protein assembly machinery. Required for maturation of extramitochondrial Fe/S proteins (By similarity).</text>
</comment>
<comment type="similarity">
    <text evidence="3">Belongs to the NARF family.</text>
</comment>
<organism>
    <name type="scientific">Brugia malayi</name>
    <name type="common">Filarial nematode worm</name>
    <dbReference type="NCBI Taxonomy" id="6279"/>
    <lineage>
        <taxon>Eukaryota</taxon>
        <taxon>Metazoa</taxon>
        <taxon>Ecdysozoa</taxon>
        <taxon>Nematoda</taxon>
        <taxon>Chromadorea</taxon>
        <taxon>Rhabditida</taxon>
        <taxon>Spirurina</taxon>
        <taxon>Spiruromorpha</taxon>
        <taxon>Filarioidea</taxon>
        <taxon>Onchocercidae</taxon>
        <taxon>Brugia</taxon>
    </lineage>
</organism>
<feature type="chain" id="PRO_0000383693" description="Probable cytosolic Fe-S cluster assembly factor Bm6838">
    <location>
        <begin position="1"/>
        <end position="448"/>
    </location>
</feature>
<feature type="binding site" evidence="2">
    <location>
        <position position="27"/>
    </location>
    <ligand>
        <name>[4Fe-4S] cluster</name>
        <dbReference type="ChEBI" id="CHEBI:49883"/>
        <label>1</label>
    </ligand>
</feature>
<feature type="binding site" evidence="2">
    <location>
        <position position="66"/>
    </location>
    <ligand>
        <name>[4Fe-4S] cluster</name>
        <dbReference type="ChEBI" id="CHEBI:49883"/>
        <label>1</label>
    </ligand>
</feature>
<feature type="binding site" evidence="2">
    <location>
        <position position="69"/>
    </location>
    <ligand>
        <name>[4Fe-4S] cluster</name>
        <dbReference type="ChEBI" id="CHEBI:49883"/>
        <label>1</label>
    </ligand>
</feature>
<feature type="binding site" evidence="2">
    <location>
        <position position="72"/>
    </location>
    <ligand>
        <name>[4Fe-4S] cluster</name>
        <dbReference type="ChEBI" id="CHEBI:49883"/>
        <label>1</label>
    </ligand>
</feature>
<feature type="binding site" evidence="2">
    <location>
        <position position="170"/>
    </location>
    <ligand>
        <name>[4Fe-4S] cluster</name>
        <dbReference type="ChEBI" id="CHEBI:49883"/>
        <label>2</label>
    </ligand>
</feature>
<feature type="binding site" evidence="2">
    <location>
        <position position="226"/>
    </location>
    <ligand>
        <name>[4Fe-4S] cluster</name>
        <dbReference type="ChEBI" id="CHEBI:49883"/>
        <label>2</label>
    </ligand>
</feature>
<feature type="binding site" evidence="2">
    <location>
        <position position="370"/>
    </location>
    <ligand>
        <name>[4Fe-4S] cluster</name>
        <dbReference type="ChEBI" id="CHEBI:49883"/>
        <label>2</label>
    </ligand>
</feature>
<feature type="binding site" evidence="2">
    <location>
        <position position="374"/>
    </location>
    <ligand>
        <name>[4Fe-4S] cluster</name>
        <dbReference type="ChEBI" id="CHEBI:49883"/>
        <label>2</label>
    </ligand>
</feature>
<gene>
    <name evidence="4" type="ORF">Bm6838</name>
</gene>
<dbReference type="EMBL" id="DS239177">
    <property type="protein sequence ID" value="EDP34689.1"/>
    <property type="molecule type" value="Genomic_DNA"/>
</dbReference>
<dbReference type="SMR" id="A8PGQ3"/>
<dbReference type="FunCoup" id="A8PGQ3">
    <property type="interactions" value="1407"/>
</dbReference>
<dbReference type="STRING" id="6279.A8PGQ3"/>
<dbReference type="EnsemblMetazoa" id="Bm6838.1">
    <property type="protein sequence ID" value="Bm6838.1"/>
    <property type="gene ID" value="WBGene00227099"/>
</dbReference>
<dbReference type="KEGG" id="bmy:BM_BM6838"/>
<dbReference type="CTD" id="6099904"/>
<dbReference type="WormBase" id="Bm6838">
    <property type="protein sequence ID" value="BM02716"/>
    <property type="gene ID" value="WBGene00227099"/>
</dbReference>
<dbReference type="HOGENOM" id="CLU_018240_0_0_1"/>
<dbReference type="InParanoid" id="A8PGQ3"/>
<dbReference type="OMA" id="INIPHLC"/>
<dbReference type="OrthoDB" id="10253113at2759"/>
<dbReference type="Proteomes" id="UP000006672">
    <property type="component" value="Unassembled WGS sequence"/>
</dbReference>
<dbReference type="GO" id="GO:0051539">
    <property type="term" value="F:4 iron, 4 sulfur cluster binding"/>
    <property type="evidence" value="ECO:0007669"/>
    <property type="project" value="UniProtKB-KW"/>
</dbReference>
<dbReference type="GO" id="GO:0046872">
    <property type="term" value="F:metal ion binding"/>
    <property type="evidence" value="ECO:0007669"/>
    <property type="project" value="UniProtKB-KW"/>
</dbReference>
<dbReference type="GO" id="GO:0016226">
    <property type="term" value="P:iron-sulfur cluster assembly"/>
    <property type="evidence" value="ECO:0000250"/>
    <property type="project" value="UniProtKB"/>
</dbReference>
<dbReference type="FunFam" id="3.30.70.20:FF:000042">
    <property type="entry name" value="Cytosolic Fe-S cluster assembly factor NAR1"/>
    <property type="match status" value="1"/>
</dbReference>
<dbReference type="Gene3D" id="3.40.50.1780">
    <property type="match status" value="1"/>
</dbReference>
<dbReference type="Gene3D" id="3.40.950.10">
    <property type="entry name" value="Fe-only Hydrogenase (Larger Subunit), Chain L, domain 3"/>
    <property type="match status" value="1"/>
</dbReference>
<dbReference type="InterPro" id="IPR050340">
    <property type="entry name" value="Cytosolic_Fe-S_CAF"/>
</dbReference>
<dbReference type="InterPro" id="IPR009016">
    <property type="entry name" value="Fe_hydrogenase"/>
</dbReference>
<dbReference type="InterPro" id="IPR004108">
    <property type="entry name" value="Fe_hydrogenase_lsu_C"/>
</dbReference>
<dbReference type="PANTHER" id="PTHR11615">
    <property type="entry name" value="NITRATE, FORMATE, IRON DEHYDROGENASE"/>
    <property type="match status" value="1"/>
</dbReference>
<dbReference type="Pfam" id="PF02906">
    <property type="entry name" value="Fe_hyd_lg_C"/>
    <property type="match status" value="1"/>
</dbReference>
<dbReference type="SUPFAM" id="SSF53920">
    <property type="entry name" value="Fe-only hydrogenase"/>
    <property type="match status" value="1"/>
</dbReference>
<sequence>MNDDDFGFSGIIKIANVSDFIAPSQACILPLQSKESDVEVQIRVRSRAKKVDDSAVKKVEVTLKDCLACSGCITSAETILIKEQSKPKFLEGLKKAQLSVMTVSPQSIASIAYKRGCHLSEAARLIARIFMNMGMKYVVDSSFGRLLTLSLSYDEFKESQLQRPIFTGVCPGFVCYAEKTHGTLLIPHISCVRSPQAMMGALVKDYLARKFNVRPEEIFHASVMPCFDKKLEAARSHSENHFNCREVDCVLSTGEVDAILDECSSTESFPVDGKVGWLNALENGKIISSEGGSSGGYAEYIVKRFVEESKTPLKLKRTIKDKNWEIIEAVDGETIVLSVAKCYGFRNIQNQVQKLKRSKCNYDYVEIMACPSGCINGGGQIRSASIEERKQLLDTIELPCSEDNSEMEEQLERVKEEWSILNPDWMNLLYTKYHAVVKSDADRISTNW</sequence>
<evidence type="ECO:0000250" key="1"/>
<evidence type="ECO:0000255" key="2"/>
<evidence type="ECO:0000305" key="3"/>
<evidence type="ECO:0000312" key="4">
    <source>
        <dbReference type="WormBase" id="Bm6838"/>
    </source>
</evidence>
<keyword id="KW-0004">4Fe-4S</keyword>
<keyword id="KW-0408">Iron</keyword>
<keyword id="KW-0411">Iron-sulfur</keyword>
<keyword id="KW-0479">Metal-binding</keyword>
<keyword id="KW-1185">Reference proteome</keyword>